<protein>
    <recommendedName>
        <fullName>Alanine dehydrogenase 2</fullName>
        <ecNumber>1.4.1.1</ecNumber>
    </recommendedName>
</protein>
<dbReference type="EC" id="1.4.1.1"/>
<dbReference type="EMBL" id="BA000033">
    <property type="protein sequence ID" value="BAB95517.1"/>
    <property type="molecule type" value="Genomic_DNA"/>
</dbReference>
<dbReference type="SMR" id="Q8NW54"/>
<dbReference type="KEGG" id="sam:MW1652"/>
<dbReference type="HOGENOM" id="CLU_003376_3_0_9"/>
<dbReference type="UniPathway" id="UPA00527">
    <property type="reaction ID" value="UER00585"/>
</dbReference>
<dbReference type="GO" id="GO:0005886">
    <property type="term" value="C:plasma membrane"/>
    <property type="evidence" value="ECO:0007669"/>
    <property type="project" value="TreeGrafter"/>
</dbReference>
<dbReference type="GO" id="GO:0000286">
    <property type="term" value="F:alanine dehydrogenase activity"/>
    <property type="evidence" value="ECO:0007669"/>
    <property type="project" value="UniProtKB-EC"/>
</dbReference>
<dbReference type="GO" id="GO:0042853">
    <property type="term" value="P:L-alanine catabolic process"/>
    <property type="evidence" value="ECO:0007669"/>
    <property type="project" value="UniProtKB-UniPathway"/>
</dbReference>
<dbReference type="CDD" id="cd05305">
    <property type="entry name" value="L-AlaDH"/>
    <property type="match status" value="1"/>
</dbReference>
<dbReference type="FunFam" id="3.40.50.720:FF:000049">
    <property type="entry name" value="Alanine dehydrogenase"/>
    <property type="match status" value="1"/>
</dbReference>
<dbReference type="Gene3D" id="3.40.50.720">
    <property type="entry name" value="NAD(P)-binding Rossmann-like Domain"/>
    <property type="match status" value="2"/>
</dbReference>
<dbReference type="InterPro" id="IPR008141">
    <property type="entry name" value="Ala_DH"/>
</dbReference>
<dbReference type="InterPro" id="IPR008143">
    <property type="entry name" value="Ala_DH/PNT_CS2"/>
</dbReference>
<dbReference type="InterPro" id="IPR008142">
    <property type="entry name" value="AlaDH/PNT_CS1"/>
</dbReference>
<dbReference type="InterPro" id="IPR007886">
    <property type="entry name" value="AlaDH/PNT_N"/>
</dbReference>
<dbReference type="InterPro" id="IPR007698">
    <property type="entry name" value="AlaDH/PNT_NAD(H)-bd"/>
</dbReference>
<dbReference type="InterPro" id="IPR036291">
    <property type="entry name" value="NAD(P)-bd_dom_sf"/>
</dbReference>
<dbReference type="NCBIfam" id="TIGR00518">
    <property type="entry name" value="alaDH"/>
    <property type="match status" value="1"/>
</dbReference>
<dbReference type="PANTHER" id="PTHR42795">
    <property type="entry name" value="ALANINE DEHYDROGENASE"/>
    <property type="match status" value="1"/>
</dbReference>
<dbReference type="PANTHER" id="PTHR42795:SF1">
    <property type="entry name" value="ALANINE DEHYDROGENASE"/>
    <property type="match status" value="1"/>
</dbReference>
<dbReference type="Pfam" id="PF01262">
    <property type="entry name" value="AlaDh_PNT_C"/>
    <property type="match status" value="1"/>
</dbReference>
<dbReference type="Pfam" id="PF05222">
    <property type="entry name" value="AlaDh_PNT_N"/>
    <property type="match status" value="1"/>
</dbReference>
<dbReference type="PIRSF" id="PIRSF000183">
    <property type="entry name" value="Alanine_dh"/>
    <property type="match status" value="1"/>
</dbReference>
<dbReference type="SMART" id="SM01002">
    <property type="entry name" value="AlaDh_PNT_C"/>
    <property type="match status" value="1"/>
</dbReference>
<dbReference type="SMART" id="SM01003">
    <property type="entry name" value="AlaDh_PNT_N"/>
    <property type="match status" value="1"/>
</dbReference>
<dbReference type="SUPFAM" id="SSF52283">
    <property type="entry name" value="Formate/glycerate dehydrogenase catalytic domain-like"/>
    <property type="match status" value="1"/>
</dbReference>
<dbReference type="SUPFAM" id="SSF51735">
    <property type="entry name" value="NAD(P)-binding Rossmann-fold domains"/>
    <property type="match status" value="1"/>
</dbReference>
<dbReference type="PROSITE" id="PS00836">
    <property type="entry name" value="ALADH_PNT_1"/>
    <property type="match status" value="1"/>
</dbReference>
<dbReference type="PROSITE" id="PS00837">
    <property type="entry name" value="ALADH_PNT_2"/>
    <property type="match status" value="1"/>
</dbReference>
<name>DHA2_STAAW</name>
<organism>
    <name type="scientific">Staphylococcus aureus (strain MW2)</name>
    <dbReference type="NCBI Taxonomy" id="196620"/>
    <lineage>
        <taxon>Bacteria</taxon>
        <taxon>Bacillati</taxon>
        <taxon>Bacillota</taxon>
        <taxon>Bacilli</taxon>
        <taxon>Bacillales</taxon>
        <taxon>Staphylococcaceae</taxon>
        <taxon>Staphylococcus</taxon>
    </lineage>
</organism>
<evidence type="ECO:0000250" key="1"/>
<evidence type="ECO:0000255" key="2"/>
<evidence type="ECO:0000305" key="3"/>
<proteinExistence type="inferred from homology"/>
<accession>Q8NW54</accession>
<keyword id="KW-0520">NAD</keyword>
<keyword id="KW-0560">Oxidoreductase</keyword>
<sequence length="372" mass="40105">MKIGIPREIKNNENRVGLSPSGVHALVESGHTVLVETNAGSGSFFEDVDYKEAGAEIVAEQAKVWDVDMVIKVKEPLESEYPYFKEGLVLFTYLHLANEEKLTQALIDRKVISIAYETVQLPDRSLPLLSPMSEVAGRMSAQVGAEFLQKLNGGMGILLGGVPGVPKGKVTIIGGGQAGTNAAKIALGLGADVTILDVNPKRLQQLDDLFGGRVHTIMSNPLNIELYVKQSDLVIGAVLIPGAKAPRLVTEDMIKQMKNGSVIIDIAIDQGGIFETTDKITTHDDPTYIKHGVVHYAVANMPGAVPRTSTLALNNATLPYALMLANKGYREAFKSNQPLSLGLNTYKGHVTNKGVAEAFEMEYKSVEEALQL</sequence>
<gene>
    <name type="primary">ald2</name>
    <name type="ordered locus">MW1652</name>
</gene>
<reference key="1">
    <citation type="journal article" date="2002" name="Lancet">
        <title>Genome and virulence determinants of high virulence community-acquired MRSA.</title>
        <authorList>
            <person name="Baba T."/>
            <person name="Takeuchi F."/>
            <person name="Kuroda M."/>
            <person name="Yuzawa H."/>
            <person name="Aoki K."/>
            <person name="Oguchi A."/>
            <person name="Nagai Y."/>
            <person name="Iwama N."/>
            <person name="Asano K."/>
            <person name="Naimi T."/>
            <person name="Kuroda H."/>
            <person name="Cui L."/>
            <person name="Yamamoto K."/>
            <person name="Hiramatsu K."/>
        </authorList>
    </citation>
    <scope>NUCLEOTIDE SEQUENCE [LARGE SCALE GENOMIC DNA]</scope>
    <source>
        <strain>MW2</strain>
    </source>
</reference>
<comment type="function">
    <text evidence="1">May play a role in cell wall synthesis as L-alanine is an important constituent of the peptidoglycan layer.</text>
</comment>
<comment type="catalytic activity">
    <reaction>
        <text>L-alanine + NAD(+) + H2O = pyruvate + NH4(+) + NADH + H(+)</text>
        <dbReference type="Rhea" id="RHEA:18405"/>
        <dbReference type="ChEBI" id="CHEBI:15361"/>
        <dbReference type="ChEBI" id="CHEBI:15377"/>
        <dbReference type="ChEBI" id="CHEBI:15378"/>
        <dbReference type="ChEBI" id="CHEBI:28938"/>
        <dbReference type="ChEBI" id="CHEBI:57540"/>
        <dbReference type="ChEBI" id="CHEBI:57945"/>
        <dbReference type="ChEBI" id="CHEBI:57972"/>
        <dbReference type="EC" id="1.4.1.1"/>
    </reaction>
</comment>
<comment type="pathway">
    <text>Amino-acid degradation; L-alanine degradation via dehydrogenase pathway; NH(3) and pyruvate from L-alanine: step 1/1.</text>
</comment>
<comment type="similarity">
    <text evidence="3">Belongs to the AlaDH/PNT family.</text>
</comment>
<feature type="chain" id="PRO_0000199006" description="Alanine dehydrogenase 2">
    <location>
        <begin position="1"/>
        <end position="372"/>
    </location>
</feature>
<feature type="active site" evidence="2">
    <location>
        <position position="95"/>
    </location>
</feature>
<feature type="binding site" evidence="1">
    <location>
        <begin position="169"/>
        <end position="199"/>
    </location>
    <ligand>
        <name>NAD(+)</name>
        <dbReference type="ChEBI" id="CHEBI:57540"/>
    </ligand>
</feature>